<name>NUOH_CAMJJ</name>
<sequence>MSDFAFFALETLIKCIIIIAIFASLAGLATYAERKVLAYFQRRIGPDMVGPFGLIQLVADMIKLFTKEDIIPSNSQKFIFAIAPLISAICAFVSLAAIPMLPEFTLFGRVIQPIVADINVALLFVIGTSGLCFYAVFLGGLASNNKWSILGAARGLVSIISYESVGALALIAIIMLVGSFSLVDINNYQSDGFFSWLIFKQPLAFVLFIIALFIETNRTPLCLTENDAEIVAGYGTEYSGLRWGIFFIGEYTSMIAGAILVTLLFLGGFNSFWIIPGWIMMIVKSSFIFFWYFWARAAFPQLRPDQVMKMCYLILIPLAVLNLLITALTVLL</sequence>
<accession>A1W1H1</accession>
<organism>
    <name type="scientific">Campylobacter jejuni subsp. jejuni serotype O:23/36 (strain 81-176)</name>
    <dbReference type="NCBI Taxonomy" id="354242"/>
    <lineage>
        <taxon>Bacteria</taxon>
        <taxon>Pseudomonadati</taxon>
        <taxon>Campylobacterota</taxon>
        <taxon>Epsilonproteobacteria</taxon>
        <taxon>Campylobacterales</taxon>
        <taxon>Campylobacteraceae</taxon>
        <taxon>Campylobacter</taxon>
    </lineage>
</organism>
<comment type="function">
    <text evidence="1">NDH-1 shuttles electrons from NADH, via FMN and iron-sulfur (Fe-S) centers, to quinones in the respiratory chain. The immediate electron acceptor for the enzyme in this species is believed to be ubiquinone. Couples the redox reaction to proton translocation (for every two electrons transferred, four hydrogen ions are translocated across the cytoplasmic membrane), and thus conserves the redox energy in a proton gradient. This subunit may bind ubiquinone.</text>
</comment>
<comment type="catalytic activity">
    <reaction evidence="1">
        <text>a quinone + NADH + 5 H(+)(in) = a quinol + NAD(+) + 4 H(+)(out)</text>
        <dbReference type="Rhea" id="RHEA:57888"/>
        <dbReference type="ChEBI" id="CHEBI:15378"/>
        <dbReference type="ChEBI" id="CHEBI:24646"/>
        <dbReference type="ChEBI" id="CHEBI:57540"/>
        <dbReference type="ChEBI" id="CHEBI:57945"/>
        <dbReference type="ChEBI" id="CHEBI:132124"/>
    </reaction>
</comment>
<comment type="subunit">
    <text evidence="1">NDH-1 is composed of 14 different subunits. Subunits NuoA, H, J, K, L, M, N constitute the membrane sector of the complex.</text>
</comment>
<comment type="subcellular location">
    <subcellularLocation>
        <location evidence="1">Cell inner membrane</location>
        <topology evidence="1">Multi-pass membrane protein</topology>
    </subcellularLocation>
</comment>
<comment type="similarity">
    <text evidence="1">Belongs to the complex I subunit 1 family.</text>
</comment>
<keyword id="KW-0997">Cell inner membrane</keyword>
<keyword id="KW-1003">Cell membrane</keyword>
<keyword id="KW-0472">Membrane</keyword>
<keyword id="KW-0520">NAD</keyword>
<keyword id="KW-0874">Quinone</keyword>
<keyword id="KW-1278">Translocase</keyword>
<keyword id="KW-0812">Transmembrane</keyword>
<keyword id="KW-1133">Transmembrane helix</keyword>
<keyword id="KW-0830">Ubiquinone</keyword>
<feature type="chain" id="PRO_0000298803" description="NADH-quinone oxidoreductase subunit H">
    <location>
        <begin position="1"/>
        <end position="332"/>
    </location>
</feature>
<feature type="transmembrane region" description="Helical" evidence="1">
    <location>
        <begin position="4"/>
        <end position="24"/>
    </location>
</feature>
<feature type="transmembrane region" description="Helical" evidence="1">
    <location>
        <begin position="44"/>
        <end position="64"/>
    </location>
</feature>
<feature type="transmembrane region" description="Helical" evidence="1">
    <location>
        <begin position="78"/>
        <end position="98"/>
    </location>
</feature>
<feature type="transmembrane region" description="Helical" evidence="1">
    <location>
        <begin position="120"/>
        <end position="140"/>
    </location>
</feature>
<feature type="transmembrane region" description="Helical" evidence="1">
    <location>
        <begin position="165"/>
        <end position="185"/>
    </location>
</feature>
<feature type="transmembrane region" description="Helical" evidence="1">
    <location>
        <begin position="194"/>
        <end position="214"/>
    </location>
</feature>
<feature type="transmembrane region" description="Helical" evidence="1">
    <location>
        <begin position="255"/>
        <end position="275"/>
    </location>
</feature>
<feature type="transmembrane region" description="Helical" evidence="1">
    <location>
        <begin position="279"/>
        <end position="299"/>
    </location>
</feature>
<feature type="transmembrane region" description="Helical" evidence="1">
    <location>
        <begin position="312"/>
        <end position="332"/>
    </location>
</feature>
<proteinExistence type="inferred from homology"/>
<reference key="1">
    <citation type="submission" date="2006-12" db="EMBL/GenBank/DDBJ databases">
        <authorList>
            <person name="Fouts D.E."/>
            <person name="Nelson K.E."/>
            <person name="Sebastian Y."/>
        </authorList>
    </citation>
    <scope>NUCLEOTIDE SEQUENCE [LARGE SCALE GENOMIC DNA]</scope>
    <source>
        <strain>81-176</strain>
    </source>
</reference>
<evidence type="ECO:0000255" key="1">
    <source>
        <dbReference type="HAMAP-Rule" id="MF_01350"/>
    </source>
</evidence>
<protein>
    <recommendedName>
        <fullName evidence="1">NADH-quinone oxidoreductase subunit H</fullName>
        <ecNumber evidence="1">7.1.1.-</ecNumber>
    </recommendedName>
    <alternativeName>
        <fullName evidence="1">NADH dehydrogenase I subunit H</fullName>
    </alternativeName>
    <alternativeName>
        <fullName evidence="1">NDH-1 subunit H</fullName>
    </alternativeName>
</protein>
<dbReference type="EC" id="7.1.1.-" evidence="1"/>
<dbReference type="EMBL" id="CP000538">
    <property type="protein sequence ID" value="EAQ72914.1"/>
    <property type="molecule type" value="Genomic_DNA"/>
</dbReference>
<dbReference type="RefSeq" id="WP_009883056.1">
    <property type="nucleotide sequence ID" value="NC_008787.1"/>
</dbReference>
<dbReference type="SMR" id="A1W1H1"/>
<dbReference type="KEGG" id="cjj:CJJ81176_1557"/>
<dbReference type="eggNOG" id="COG1005">
    <property type="taxonomic scope" value="Bacteria"/>
</dbReference>
<dbReference type="HOGENOM" id="CLU_015134_0_1_7"/>
<dbReference type="Proteomes" id="UP000000646">
    <property type="component" value="Chromosome"/>
</dbReference>
<dbReference type="GO" id="GO:0005886">
    <property type="term" value="C:plasma membrane"/>
    <property type="evidence" value="ECO:0007669"/>
    <property type="project" value="UniProtKB-SubCell"/>
</dbReference>
<dbReference type="GO" id="GO:0003954">
    <property type="term" value="F:NADH dehydrogenase activity"/>
    <property type="evidence" value="ECO:0007669"/>
    <property type="project" value="TreeGrafter"/>
</dbReference>
<dbReference type="GO" id="GO:0016655">
    <property type="term" value="F:oxidoreductase activity, acting on NAD(P)H, quinone or similar compound as acceptor"/>
    <property type="evidence" value="ECO:0007669"/>
    <property type="project" value="UniProtKB-UniRule"/>
</dbReference>
<dbReference type="GO" id="GO:0048038">
    <property type="term" value="F:quinone binding"/>
    <property type="evidence" value="ECO:0007669"/>
    <property type="project" value="UniProtKB-KW"/>
</dbReference>
<dbReference type="GO" id="GO:0009060">
    <property type="term" value="P:aerobic respiration"/>
    <property type="evidence" value="ECO:0007669"/>
    <property type="project" value="TreeGrafter"/>
</dbReference>
<dbReference type="HAMAP" id="MF_01350">
    <property type="entry name" value="NDH1_NuoH"/>
    <property type="match status" value="1"/>
</dbReference>
<dbReference type="InterPro" id="IPR001694">
    <property type="entry name" value="NADH_UbQ_OxRdtase_su1/FPO"/>
</dbReference>
<dbReference type="InterPro" id="IPR018086">
    <property type="entry name" value="NADH_UbQ_OxRdtase_su1_CS"/>
</dbReference>
<dbReference type="NCBIfam" id="NF004741">
    <property type="entry name" value="PRK06076.1-2"/>
    <property type="match status" value="1"/>
</dbReference>
<dbReference type="PANTHER" id="PTHR11432">
    <property type="entry name" value="NADH DEHYDROGENASE SUBUNIT 1"/>
    <property type="match status" value="1"/>
</dbReference>
<dbReference type="PANTHER" id="PTHR11432:SF3">
    <property type="entry name" value="NADH-UBIQUINONE OXIDOREDUCTASE CHAIN 1"/>
    <property type="match status" value="1"/>
</dbReference>
<dbReference type="Pfam" id="PF00146">
    <property type="entry name" value="NADHdh"/>
    <property type="match status" value="1"/>
</dbReference>
<dbReference type="PROSITE" id="PS00667">
    <property type="entry name" value="COMPLEX1_ND1_1"/>
    <property type="match status" value="1"/>
</dbReference>
<gene>
    <name evidence="1" type="primary">nuoH</name>
    <name type="ordered locus">CJJ81176_1557</name>
</gene>